<dbReference type="EC" id="1.2.1.41" evidence="1"/>
<dbReference type="EMBL" id="CP000774">
    <property type="protein sequence ID" value="ABS63098.1"/>
    <property type="molecule type" value="Genomic_DNA"/>
</dbReference>
<dbReference type="RefSeq" id="WP_012110381.1">
    <property type="nucleotide sequence ID" value="NC_009719.1"/>
</dbReference>
<dbReference type="SMR" id="A7HT65"/>
<dbReference type="STRING" id="402881.Plav_1478"/>
<dbReference type="KEGG" id="pla:Plav_1478"/>
<dbReference type="eggNOG" id="COG0014">
    <property type="taxonomic scope" value="Bacteria"/>
</dbReference>
<dbReference type="HOGENOM" id="CLU_030231_0_0_5"/>
<dbReference type="OrthoDB" id="9809970at2"/>
<dbReference type="UniPathway" id="UPA00098">
    <property type="reaction ID" value="UER00360"/>
</dbReference>
<dbReference type="Proteomes" id="UP000006377">
    <property type="component" value="Chromosome"/>
</dbReference>
<dbReference type="GO" id="GO:0005737">
    <property type="term" value="C:cytoplasm"/>
    <property type="evidence" value="ECO:0007669"/>
    <property type="project" value="UniProtKB-SubCell"/>
</dbReference>
<dbReference type="GO" id="GO:0004350">
    <property type="term" value="F:glutamate-5-semialdehyde dehydrogenase activity"/>
    <property type="evidence" value="ECO:0007669"/>
    <property type="project" value="UniProtKB-UniRule"/>
</dbReference>
<dbReference type="GO" id="GO:0050661">
    <property type="term" value="F:NADP binding"/>
    <property type="evidence" value="ECO:0007669"/>
    <property type="project" value="InterPro"/>
</dbReference>
<dbReference type="GO" id="GO:0055129">
    <property type="term" value="P:L-proline biosynthetic process"/>
    <property type="evidence" value="ECO:0007669"/>
    <property type="project" value="UniProtKB-UniRule"/>
</dbReference>
<dbReference type="CDD" id="cd07079">
    <property type="entry name" value="ALDH_F18-19_ProA-GPR"/>
    <property type="match status" value="1"/>
</dbReference>
<dbReference type="FunFam" id="3.40.309.10:FF:000006">
    <property type="entry name" value="Gamma-glutamyl phosphate reductase"/>
    <property type="match status" value="1"/>
</dbReference>
<dbReference type="Gene3D" id="3.40.605.10">
    <property type="entry name" value="Aldehyde Dehydrogenase, Chain A, domain 1"/>
    <property type="match status" value="1"/>
</dbReference>
<dbReference type="Gene3D" id="3.40.309.10">
    <property type="entry name" value="Aldehyde Dehydrogenase, Chain A, domain 2"/>
    <property type="match status" value="1"/>
</dbReference>
<dbReference type="HAMAP" id="MF_00412">
    <property type="entry name" value="ProA"/>
    <property type="match status" value="1"/>
</dbReference>
<dbReference type="InterPro" id="IPR016161">
    <property type="entry name" value="Ald_DH/histidinol_DH"/>
</dbReference>
<dbReference type="InterPro" id="IPR016163">
    <property type="entry name" value="Ald_DH_C"/>
</dbReference>
<dbReference type="InterPro" id="IPR016162">
    <property type="entry name" value="Ald_DH_N"/>
</dbReference>
<dbReference type="InterPro" id="IPR015590">
    <property type="entry name" value="Aldehyde_DH_dom"/>
</dbReference>
<dbReference type="InterPro" id="IPR020593">
    <property type="entry name" value="G-glutamylP_reductase_CS"/>
</dbReference>
<dbReference type="InterPro" id="IPR012134">
    <property type="entry name" value="Glu-5-SA_DH"/>
</dbReference>
<dbReference type="InterPro" id="IPR000965">
    <property type="entry name" value="GPR_dom"/>
</dbReference>
<dbReference type="NCBIfam" id="NF001221">
    <property type="entry name" value="PRK00197.1"/>
    <property type="match status" value="1"/>
</dbReference>
<dbReference type="NCBIfam" id="TIGR00407">
    <property type="entry name" value="proA"/>
    <property type="match status" value="1"/>
</dbReference>
<dbReference type="PANTHER" id="PTHR11063:SF8">
    <property type="entry name" value="DELTA-1-PYRROLINE-5-CARBOXYLATE SYNTHASE"/>
    <property type="match status" value="1"/>
</dbReference>
<dbReference type="PANTHER" id="PTHR11063">
    <property type="entry name" value="GLUTAMATE SEMIALDEHYDE DEHYDROGENASE"/>
    <property type="match status" value="1"/>
</dbReference>
<dbReference type="Pfam" id="PF00171">
    <property type="entry name" value="Aldedh"/>
    <property type="match status" value="1"/>
</dbReference>
<dbReference type="PIRSF" id="PIRSF000151">
    <property type="entry name" value="GPR"/>
    <property type="match status" value="1"/>
</dbReference>
<dbReference type="SUPFAM" id="SSF53720">
    <property type="entry name" value="ALDH-like"/>
    <property type="match status" value="1"/>
</dbReference>
<dbReference type="PROSITE" id="PS01223">
    <property type="entry name" value="PROA"/>
    <property type="match status" value="1"/>
</dbReference>
<comment type="function">
    <text evidence="1">Catalyzes the NADPH-dependent reduction of L-glutamate 5-phosphate into L-glutamate 5-semialdehyde and phosphate. The product spontaneously undergoes cyclization to form 1-pyrroline-5-carboxylate.</text>
</comment>
<comment type="catalytic activity">
    <reaction evidence="1">
        <text>L-glutamate 5-semialdehyde + phosphate + NADP(+) = L-glutamyl 5-phosphate + NADPH + H(+)</text>
        <dbReference type="Rhea" id="RHEA:19541"/>
        <dbReference type="ChEBI" id="CHEBI:15378"/>
        <dbReference type="ChEBI" id="CHEBI:43474"/>
        <dbReference type="ChEBI" id="CHEBI:57783"/>
        <dbReference type="ChEBI" id="CHEBI:58066"/>
        <dbReference type="ChEBI" id="CHEBI:58274"/>
        <dbReference type="ChEBI" id="CHEBI:58349"/>
        <dbReference type="EC" id="1.2.1.41"/>
    </reaction>
</comment>
<comment type="pathway">
    <text evidence="1">Amino-acid biosynthesis; L-proline biosynthesis; L-glutamate 5-semialdehyde from L-glutamate: step 2/2.</text>
</comment>
<comment type="subcellular location">
    <subcellularLocation>
        <location evidence="1">Cytoplasm</location>
    </subcellularLocation>
</comment>
<comment type="similarity">
    <text evidence="1">Belongs to the gamma-glutamyl phosphate reductase family.</text>
</comment>
<proteinExistence type="inferred from homology"/>
<gene>
    <name evidence="1" type="primary">proA</name>
    <name type="ordered locus">Plav_1478</name>
</gene>
<accession>A7HT65</accession>
<evidence type="ECO:0000255" key="1">
    <source>
        <dbReference type="HAMAP-Rule" id="MF_00412"/>
    </source>
</evidence>
<name>PROA_PARL1</name>
<reference key="1">
    <citation type="journal article" date="2011" name="Stand. Genomic Sci.">
        <title>Complete genome sequence of Parvibaculum lavamentivorans type strain (DS-1(T)).</title>
        <authorList>
            <person name="Schleheck D."/>
            <person name="Weiss M."/>
            <person name="Pitluck S."/>
            <person name="Bruce D."/>
            <person name="Land M.L."/>
            <person name="Han S."/>
            <person name="Saunders E."/>
            <person name="Tapia R."/>
            <person name="Detter C."/>
            <person name="Brettin T."/>
            <person name="Han J."/>
            <person name="Woyke T."/>
            <person name="Goodwin L."/>
            <person name="Pennacchio L."/>
            <person name="Nolan M."/>
            <person name="Cook A.M."/>
            <person name="Kjelleberg S."/>
            <person name="Thomas T."/>
        </authorList>
    </citation>
    <scope>NUCLEOTIDE SEQUENCE [LARGE SCALE GENOMIC DNA]</scope>
    <source>
        <strain>DS-1 / DSM 13023 / NCIMB 13966</strain>
    </source>
</reference>
<protein>
    <recommendedName>
        <fullName evidence="1">Gamma-glutamyl phosphate reductase</fullName>
        <shortName evidence="1">GPR</shortName>
        <ecNumber evidence="1">1.2.1.41</ecNumber>
    </recommendedName>
    <alternativeName>
        <fullName evidence="1">Glutamate-5-semialdehyde dehydrogenase</fullName>
    </alternativeName>
    <alternativeName>
        <fullName evidence="1">Glutamyl-gamma-semialdehyde dehydrogenase</fullName>
        <shortName evidence="1">GSA dehydrogenase</shortName>
    </alternativeName>
</protein>
<feature type="chain" id="PRO_0000340902" description="Gamma-glutamyl phosphate reductase">
    <location>
        <begin position="1"/>
        <end position="424"/>
    </location>
</feature>
<keyword id="KW-0028">Amino-acid biosynthesis</keyword>
<keyword id="KW-0963">Cytoplasm</keyword>
<keyword id="KW-0521">NADP</keyword>
<keyword id="KW-0560">Oxidoreductase</keyword>
<keyword id="KW-0641">Proline biosynthesis</keyword>
<keyword id="KW-1185">Reference proteome</keyword>
<sequence>MNADRQDVSLLMEEIGVAARSASRLLAQAPTKQKDAALLAAAMAVRANIDDILAANAEDVADAVKSGTAPSLIDRMTLDTKRIEAIARALEEIAALPDPVGATMAEWDRPNGLHISRVRVPLGVIGIIYESRPNVTADAGALCLKSGNAAILRGGSDAMRSSQAIHASILEGVIAAGLPEAAIQLVPTSDRGAVGEMLKGLGGNLDVIVPRGGKSLVARVQEEARVPVFAHLEGVCHVYVDGEADLDMARNIVLNAKLRRTGVCGAAETLLVDEACAATHLAPLVAALIAEGCEVRGDEAAQKADPRVKPATEDDWYTEYLDSIIAVRVVKGVKDAISHIAKYGSSHTEAIVTANQVTADRFLAEVDSAIVLHNASTQFADGGEFGMGAEIGIATGKFHARGPVGVEQLTSFKYLVRGSGQVRP</sequence>
<organism>
    <name type="scientific">Parvibaculum lavamentivorans (strain DS-1 / DSM 13023 / NCIMB 13966)</name>
    <dbReference type="NCBI Taxonomy" id="402881"/>
    <lineage>
        <taxon>Bacteria</taxon>
        <taxon>Pseudomonadati</taxon>
        <taxon>Pseudomonadota</taxon>
        <taxon>Alphaproteobacteria</taxon>
        <taxon>Hyphomicrobiales</taxon>
        <taxon>Parvibaculaceae</taxon>
        <taxon>Parvibaculum</taxon>
    </lineage>
</organism>